<feature type="chain" id="PRO_1000024016" description="Dihydroorotase">
    <location>
        <begin position="1"/>
        <end position="339"/>
    </location>
</feature>
<feature type="active site" evidence="1">
    <location>
        <position position="239"/>
    </location>
</feature>
<feature type="binding site" evidence="1">
    <location>
        <position position="12"/>
    </location>
    <ligand>
        <name>Zn(2+)</name>
        <dbReference type="ChEBI" id="CHEBI:29105"/>
        <label>1</label>
    </ligand>
</feature>
<feature type="binding site" evidence="1">
    <location>
        <begin position="14"/>
        <end position="16"/>
    </location>
    <ligand>
        <name>substrate</name>
    </ligand>
</feature>
<feature type="binding site" evidence="1">
    <location>
        <position position="14"/>
    </location>
    <ligand>
        <name>Zn(2+)</name>
        <dbReference type="ChEBI" id="CHEBI:29105"/>
        <label>1</label>
    </ligand>
</feature>
<feature type="binding site" evidence="1">
    <location>
        <position position="40"/>
    </location>
    <ligand>
        <name>substrate</name>
    </ligand>
</feature>
<feature type="binding site" description="via carbamate group" evidence="1">
    <location>
        <position position="94"/>
    </location>
    <ligand>
        <name>Zn(2+)</name>
        <dbReference type="ChEBI" id="CHEBI:29105"/>
        <label>1</label>
    </ligand>
</feature>
<feature type="binding site" description="via carbamate group" evidence="1">
    <location>
        <position position="94"/>
    </location>
    <ligand>
        <name>Zn(2+)</name>
        <dbReference type="ChEBI" id="CHEBI:29105"/>
        <label>2</label>
    </ligand>
</feature>
<feature type="binding site" evidence="1">
    <location>
        <position position="133"/>
    </location>
    <ligand>
        <name>substrate</name>
    </ligand>
</feature>
<feature type="binding site" evidence="1">
    <location>
        <position position="133"/>
    </location>
    <ligand>
        <name>Zn(2+)</name>
        <dbReference type="ChEBI" id="CHEBI:29105"/>
        <label>2</label>
    </ligand>
</feature>
<feature type="binding site" evidence="1">
    <location>
        <position position="167"/>
    </location>
    <ligand>
        <name>Zn(2+)</name>
        <dbReference type="ChEBI" id="CHEBI:29105"/>
        <label>2</label>
    </ligand>
</feature>
<feature type="binding site" evidence="1">
    <location>
        <position position="239"/>
    </location>
    <ligand>
        <name>Zn(2+)</name>
        <dbReference type="ChEBI" id="CHEBI:29105"/>
        <label>1</label>
    </ligand>
</feature>
<feature type="binding site" evidence="1">
    <location>
        <position position="243"/>
    </location>
    <ligand>
        <name>substrate</name>
    </ligand>
</feature>
<feature type="binding site" evidence="1">
    <location>
        <position position="255"/>
    </location>
    <ligand>
        <name>substrate</name>
    </ligand>
</feature>
<feature type="modified residue" description="N6-carboxylysine" evidence="1">
    <location>
        <position position="94"/>
    </location>
</feature>
<organism>
    <name type="scientific">Helicobacter acinonychis (strain Sheeba)</name>
    <dbReference type="NCBI Taxonomy" id="382638"/>
    <lineage>
        <taxon>Bacteria</taxon>
        <taxon>Pseudomonadati</taxon>
        <taxon>Campylobacterota</taxon>
        <taxon>Epsilonproteobacteria</taxon>
        <taxon>Campylobacterales</taxon>
        <taxon>Helicobacteraceae</taxon>
        <taxon>Helicobacter</taxon>
    </lineage>
</organism>
<keyword id="KW-0378">Hydrolase</keyword>
<keyword id="KW-0479">Metal-binding</keyword>
<keyword id="KW-0665">Pyrimidine biosynthesis</keyword>
<keyword id="KW-0862">Zinc</keyword>
<accession>Q17W17</accession>
<comment type="function">
    <text evidence="1">Catalyzes the reversible cyclization of carbamoyl aspartate to dihydroorotate.</text>
</comment>
<comment type="catalytic activity">
    <reaction evidence="1">
        <text>(S)-dihydroorotate + H2O = N-carbamoyl-L-aspartate + H(+)</text>
        <dbReference type="Rhea" id="RHEA:24296"/>
        <dbReference type="ChEBI" id="CHEBI:15377"/>
        <dbReference type="ChEBI" id="CHEBI:15378"/>
        <dbReference type="ChEBI" id="CHEBI:30864"/>
        <dbReference type="ChEBI" id="CHEBI:32814"/>
        <dbReference type="EC" id="3.5.2.3"/>
    </reaction>
</comment>
<comment type="cofactor">
    <cofactor evidence="1">
        <name>Zn(2+)</name>
        <dbReference type="ChEBI" id="CHEBI:29105"/>
    </cofactor>
    <text evidence="1">Binds 2 Zn(2+) ions per subunit.</text>
</comment>
<comment type="pathway">
    <text evidence="1">Pyrimidine metabolism; UMP biosynthesis via de novo pathway; (S)-dihydroorotate from bicarbonate: step 3/3.</text>
</comment>
<comment type="subunit">
    <text evidence="1">Homodimer.</text>
</comment>
<comment type="similarity">
    <text evidence="1">Belongs to the metallo-dependent hydrolases superfamily. DHOase family. Class II DHOase subfamily.</text>
</comment>
<proteinExistence type="inferred from homology"/>
<sequence length="339" mass="38001">MEITLFDPIDAHLHVREGVLLKAVLKYSSEPFSAAVIMPNLSKPLIDTQITLEYEGEILKNSSNFKPLMSLYFNDGLTLEELQHAKHQGIKFLKLYPKGMTTNAQNGTSDLLGEKTLEILEDAQKLGFILCIHAEQAGFCLDKEFLCHSVLETFAHSFPKLKIIIEHLSDWRSIALIEKHDNLYATLTLHHISMTLDDLLGGSLNPHCFCKPLIKTQKDQERLLSLALKAHPKISFGSDSAPHVISKKHSANIPAGIFSAPILLPALCELFEKHNALENLQAFISDNAKKIYTLDNLPSKKVRLSKKPFIVPTHTLCLNEKIAILREGETLSWNIQEIA</sequence>
<reference key="1">
    <citation type="journal article" date="2006" name="PLoS Genet.">
        <title>Who ate whom? Adaptive Helicobacter genomic changes that accompanied a host jump from early humans to large felines.</title>
        <authorList>
            <person name="Eppinger M."/>
            <person name="Baar C."/>
            <person name="Linz B."/>
            <person name="Raddatz G."/>
            <person name="Lanz C."/>
            <person name="Keller H."/>
            <person name="Morelli G."/>
            <person name="Gressmann H."/>
            <person name="Achtman M."/>
            <person name="Schuster S.C."/>
        </authorList>
    </citation>
    <scope>NUCLEOTIDE SEQUENCE [LARGE SCALE GENOMIC DNA]</scope>
    <source>
        <strain>Sheeba</strain>
    </source>
</reference>
<protein>
    <recommendedName>
        <fullName evidence="1">Dihydroorotase</fullName>
        <shortName evidence="1">DHOase</shortName>
        <ecNumber evidence="1">3.5.2.3</ecNumber>
    </recommendedName>
</protein>
<name>PYRC_HELAH</name>
<dbReference type="EC" id="3.5.2.3" evidence="1"/>
<dbReference type="EMBL" id="AM260522">
    <property type="protein sequence ID" value="CAK00159.1"/>
    <property type="molecule type" value="Genomic_DNA"/>
</dbReference>
<dbReference type="RefSeq" id="WP_011578249.1">
    <property type="nucleotide sequence ID" value="NC_008229.1"/>
</dbReference>
<dbReference type="SMR" id="Q17W17"/>
<dbReference type="STRING" id="382638.Hac_1431"/>
<dbReference type="GeneID" id="31758721"/>
<dbReference type="KEGG" id="hac:Hac_1431"/>
<dbReference type="eggNOG" id="COG0418">
    <property type="taxonomic scope" value="Bacteria"/>
</dbReference>
<dbReference type="HOGENOM" id="CLU_041558_0_0_7"/>
<dbReference type="OrthoDB" id="9808095at2"/>
<dbReference type="BioCyc" id="HACI382638:HAC_RS06090-MONOMER"/>
<dbReference type="UniPathway" id="UPA00070">
    <property type="reaction ID" value="UER00117"/>
</dbReference>
<dbReference type="Proteomes" id="UP000000775">
    <property type="component" value="Chromosome"/>
</dbReference>
<dbReference type="GO" id="GO:0005829">
    <property type="term" value="C:cytosol"/>
    <property type="evidence" value="ECO:0007669"/>
    <property type="project" value="TreeGrafter"/>
</dbReference>
<dbReference type="GO" id="GO:0004151">
    <property type="term" value="F:dihydroorotase activity"/>
    <property type="evidence" value="ECO:0007669"/>
    <property type="project" value="UniProtKB-UniRule"/>
</dbReference>
<dbReference type="GO" id="GO:0008270">
    <property type="term" value="F:zinc ion binding"/>
    <property type="evidence" value="ECO:0007669"/>
    <property type="project" value="UniProtKB-UniRule"/>
</dbReference>
<dbReference type="GO" id="GO:0006207">
    <property type="term" value="P:'de novo' pyrimidine nucleobase biosynthetic process"/>
    <property type="evidence" value="ECO:0007669"/>
    <property type="project" value="TreeGrafter"/>
</dbReference>
<dbReference type="GO" id="GO:0044205">
    <property type="term" value="P:'de novo' UMP biosynthetic process"/>
    <property type="evidence" value="ECO:0007669"/>
    <property type="project" value="UniProtKB-UniRule"/>
</dbReference>
<dbReference type="Gene3D" id="3.20.20.140">
    <property type="entry name" value="Metal-dependent hydrolases"/>
    <property type="match status" value="1"/>
</dbReference>
<dbReference type="HAMAP" id="MF_00219">
    <property type="entry name" value="PyrC_classII"/>
    <property type="match status" value="1"/>
</dbReference>
<dbReference type="InterPro" id="IPR004721">
    <property type="entry name" value="DHOdimr"/>
</dbReference>
<dbReference type="InterPro" id="IPR002195">
    <property type="entry name" value="Dihydroorotase_CS"/>
</dbReference>
<dbReference type="InterPro" id="IPR032466">
    <property type="entry name" value="Metal_Hydrolase"/>
</dbReference>
<dbReference type="NCBIfam" id="TIGR00856">
    <property type="entry name" value="pyrC_dimer"/>
    <property type="match status" value="1"/>
</dbReference>
<dbReference type="PANTHER" id="PTHR43137">
    <property type="entry name" value="DIHYDROOROTASE"/>
    <property type="match status" value="1"/>
</dbReference>
<dbReference type="PANTHER" id="PTHR43137:SF1">
    <property type="entry name" value="DIHYDROOROTASE"/>
    <property type="match status" value="1"/>
</dbReference>
<dbReference type="PIRSF" id="PIRSF001237">
    <property type="entry name" value="DHOdimr"/>
    <property type="match status" value="1"/>
</dbReference>
<dbReference type="SUPFAM" id="SSF51556">
    <property type="entry name" value="Metallo-dependent hydrolases"/>
    <property type="match status" value="1"/>
</dbReference>
<dbReference type="PROSITE" id="PS00482">
    <property type="entry name" value="DIHYDROOROTASE_1"/>
    <property type="match status" value="1"/>
</dbReference>
<dbReference type="PROSITE" id="PS00483">
    <property type="entry name" value="DIHYDROOROTASE_2"/>
    <property type="match status" value="1"/>
</dbReference>
<gene>
    <name evidence="1" type="primary">pyrC</name>
    <name type="ordered locus">Hac_1431</name>
</gene>
<evidence type="ECO:0000255" key="1">
    <source>
        <dbReference type="HAMAP-Rule" id="MF_00219"/>
    </source>
</evidence>